<reference key="1">
    <citation type="journal article" date="1992" name="Nucleic Acids Res.">
        <title>Characterization of Chlorella virus PBCV-1 CviAII restriction and modification system.</title>
        <authorList>
            <person name="Zhang Y."/>
            <person name="Nelson M."/>
            <person name="Nietfeldt J.W."/>
            <person name="Burbank D.E."/>
            <person name="van Etten J.L."/>
        </authorList>
    </citation>
    <scope>NUCLEOTIDE SEQUENCE [GENOMIC DNA]</scope>
    <scope>FUNCTION</scope>
    <scope>CATALYTIC ACTIVITY</scope>
    <scope>BIOPHYSICOCHEMICAL PROPERTIES</scope>
</reference>
<reference key="2">
    <citation type="journal article" date="1996" name="Virology">
        <title>Analysis of 94 kb of the chlorella virus PBCV-1 330-kb genome: map positions 88 to 182.</title>
        <authorList>
            <person name="Lu Z."/>
            <person name="Li Y."/>
            <person name="Que Q."/>
            <person name="Kutish G.F."/>
            <person name="Rock D.L."/>
            <person name="van Etten J.L."/>
        </authorList>
    </citation>
    <scope>NUCLEOTIDE SEQUENCE [LARGE SCALE GENOMIC DNA]</scope>
</reference>
<reference key="3">
    <citation type="submission" date="2011-02" db="EMBL/GenBank/DDBJ databases">
        <authorList>
            <person name="Dunigan D.D."/>
            <person name="Blanc G."/>
            <person name="Duncan G.A."/>
            <person name="Gurnon J.R."/>
            <person name="Jeanniard A."/>
            <person name="McClung O.W."/>
            <person name="Upton C."/>
            <person name="van Etten J.L."/>
        </authorList>
    </citation>
    <scope>SEQUENCE REVISION TO THR-86 AND THR-165</scope>
</reference>
<reference key="4">
    <citation type="journal article" date="2003" name="Nucleic Acids Res.">
        <title>A nomenclature for restriction enzymes, DNA methyltransferases, homing endonucleases and their genes.</title>
        <authorList>
            <person name="Roberts R.J."/>
            <person name="Belfort M."/>
            <person name="Bestor T."/>
            <person name="Bhagwat A.S."/>
            <person name="Bickle T.A."/>
            <person name="Bitinaite J."/>
            <person name="Blumenthal R.M."/>
            <person name="Degtyarev S.K."/>
            <person name="Dryden D.T."/>
            <person name="Dybvig K."/>
            <person name="Firman K."/>
            <person name="Gromova E.S."/>
            <person name="Gumport R.I."/>
            <person name="Halford S.E."/>
            <person name="Hattman S."/>
            <person name="Heitman J."/>
            <person name="Hornby D.P."/>
            <person name="Janulaitis A."/>
            <person name="Jeltsch A."/>
            <person name="Josephsen J."/>
            <person name="Kiss A."/>
            <person name="Klaenhammer T.R."/>
            <person name="Kobayashi I."/>
            <person name="Kong H."/>
            <person name="Krueger D.H."/>
            <person name="Lacks S."/>
            <person name="Marinus M.G."/>
            <person name="Miyahara M."/>
            <person name="Morgan R.D."/>
            <person name="Murray N.E."/>
            <person name="Nagaraja V."/>
            <person name="Piekarowicz A."/>
            <person name="Pingoud A."/>
            <person name="Raleigh E."/>
            <person name="Rao D.N."/>
            <person name="Reich N."/>
            <person name="Repin V.E."/>
            <person name="Selker E.U."/>
            <person name="Shaw P.C."/>
            <person name="Stein D.C."/>
            <person name="Stoddard B.L."/>
            <person name="Szybalski W."/>
            <person name="Trautner T.A."/>
            <person name="Van Etten J.L."/>
            <person name="Vitor J.M."/>
            <person name="Wilson G.G."/>
            <person name="Xu S.Y."/>
        </authorList>
    </citation>
    <scope>NOMENCLATURE</scope>
    <scope>SUBTYPE</scope>
</reference>
<reference key="5">
    <citation type="journal article" date="2010" name="J. Virol.">
        <title>Microarray analysis of Paramecium bursaria chlorella virus 1 transcription.</title>
        <authorList>
            <person name="Yanai-Balser G.M."/>
            <person name="Duncan G.A."/>
            <person name="Eudy J.D."/>
            <person name="Wang D."/>
            <person name="Li X."/>
            <person name="Agarkova I.V."/>
            <person name="Dunigan D.D."/>
            <person name="Van Etten J.L."/>
        </authorList>
    </citation>
    <scope>INDUCTION</scope>
</reference>
<comment type="function">
    <text evidence="1 3">A P subtype restriction enzyme that recognizes the double-stranded sequence 5'-CATG-3' and cleaves after C-1.</text>
</comment>
<comment type="catalytic activity">
    <reaction evidence="1">
        <text>Endonucleolytic cleavage of DNA to give specific double-stranded fragments with terminal 5'-phosphates.</text>
        <dbReference type="EC" id="3.1.21.4"/>
    </reaction>
</comment>
<comment type="biophysicochemical properties">
    <phDependence>
        <text evidence="1">Optimum pH is 8.5-9.0.</text>
    </phDependence>
    <temperatureDependence>
        <text evidence="1">Optimum temperature is 23 degrees Celsius.</text>
    </temperatureDependence>
</comment>
<comment type="induction">
    <text evidence="2">Expressed in the late phase of the viral replicative cycle.</text>
</comment>
<name>T2C2_PBCV1</name>
<accession>P31117</accession>
<accession>O41016</accession>
<gene>
    <name type="primary">CVIAIIR</name>
    <name type="ordered locus">A252R</name>
</gene>
<feature type="chain" id="PRO_0000077297" description="Type II restriction enzyme CviAII">
    <location>
        <begin position="1"/>
        <end position="342"/>
    </location>
</feature>
<organismHost>
    <name type="scientific">Chlorella</name>
    <dbReference type="NCBI Taxonomy" id="3071"/>
</organismHost>
<keyword id="KW-0255">Endonuclease</keyword>
<keyword id="KW-0378">Hydrolase</keyword>
<keyword id="KW-0540">Nuclease</keyword>
<keyword id="KW-1185">Reference proteome</keyword>
<keyword id="KW-0680">Restriction system</keyword>
<proteinExistence type="evidence at protein level"/>
<dbReference type="EC" id="3.1.21.4" evidence="1"/>
<dbReference type="EMBL" id="M86639">
    <property type="protein sequence ID" value="AAB92382.1"/>
    <property type="molecule type" value="Genomic_DNA"/>
</dbReference>
<dbReference type="EMBL" id="JF411744">
    <property type="protein sequence ID" value="AAC97063.2"/>
    <property type="molecule type" value="Genomic_DNA"/>
</dbReference>
<dbReference type="PIR" id="S35443">
    <property type="entry name" value="S27902"/>
</dbReference>
<dbReference type="RefSeq" id="NP_048603.2">
    <property type="nucleotide sequence ID" value="NC_000852.5"/>
</dbReference>
<dbReference type="REBASE" id="2211">
    <property type="entry name" value="CviAII"/>
</dbReference>
<dbReference type="GeneID" id="918300"/>
<dbReference type="KEGG" id="vg:918300"/>
<dbReference type="OrthoDB" id="38469at10239"/>
<dbReference type="PRO" id="PR:P31117"/>
<dbReference type="Proteomes" id="UP000000862">
    <property type="component" value="Genome"/>
</dbReference>
<dbReference type="GO" id="GO:0009036">
    <property type="term" value="F:type II site-specific deoxyribonuclease activity"/>
    <property type="evidence" value="ECO:0007669"/>
    <property type="project" value="UniProtKB-EC"/>
</dbReference>
<dbReference type="GO" id="GO:0009307">
    <property type="term" value="P:DNA restriction-modification system"/>
    <property type="evidence" value="ECO:0007669"/>
    <property type="project" value="UniProtKB-KW"/>
</dbReference>
<organism>
    <name type="scientific">Paramecium bursaria Chlorella virus 1</name>
    <name type="common">PBCV-1</name>
    <dbReference type="NCBI Taxonomy" id="10506"/>
    <lineage>
        <taxon>Viruses</taxon>
        <taxon>Varidnaviria</taxon>
        <taxon>Bamfordvirae</taxon>
        <taxon>Nucleocytoviricota</taxon>
        <taxon>Megaviricetes</taxon>
        <taxon>Algavirales</taxon>
        <taxon>Phycodnaviridae</taxon>
        <taxon>Chlorovirus</taxon>
    </lineage>
</organism>
<sequence length="342" mass="39856">MTQKILNPVTGRFVKVDGSTGKKIKTGNIYDVNNILSSKLTKKIFDKIRRNDLAKEERETQQLTKKISKGIFDKIRSENKKYEKNTQKLTKKMVLDIFSKIYKEDSRKSKTQCVVSEKKDNGGVLLTEDLGKIFEKSICMLYDTPYIGPYKYGNEKPMLLKTRLTKLLDFFPELTHTAAGGALHDFTTKNSRYLSAKTSKKKDGKVAPQKIGQPTKKKFLEFFNLPPDTSNDDIKLFIKKNIVRILDEYFKYTFDDTIIYYNEVNNIIMLVKTLKKVKFDPNLIEFGCNKPGKSWKESTILFYNNKRLGEFQIHTSRSCIKFRWFFENILLLFPDNFEVTIL</sequence>
<protein>
    <recommendedName>
        <fullName evidence="3">Type II restriction enzyme CviAII</fullName>
        <shortName evidence="4">R.CviAII</shortName>
        <ecNumber evidence="1">3.1.21.4</ecNumber>
    </recommendedName>
    <alternativeName>
        <fullName>Endonuclease CviAII</fullName>
    </alternativeName>
    <alternativeName>
        <fullName>Type-2 restriction enzyme CviAII</fullName>
    </alternativeName>
</protein>
<evidence type="ECO:0000269" key="1">
    <source>
    </source>
</evidence>
<evidence type="ECO:0000269" key="2">
    <source>
    </source>
</evidence>
<evidence type="ECO:0000303" key="3">
    <source>
    </source>
</evidence>
<evidence type="ECO:0000303" key="4">
    <source>
    </source>
</evidence>